<organism>
    <name type="scientific">Geobacillus stearothermophilus</name>
    <name type="common">Bacillus stearothermophilus</name>
    <dbReference type="NCBI Taxonomy" id="1422"/>
    <lineage>
        <taxon>Bacteria</taxon>
        <taxon>Bacillati</taxon>
        <taxon>Bacillota</taxon>
        <taxon>Bacilli</taxon>
        <taxon>Bacillales</taxon>
        <taxon>Anoxybacillaceae</taxon>
        <taxon>Geobacillus</taxon>
    </lineage>
</organism>
<keyword id="KW-0479">Metal-binding</keyword>
<keyword id="KW-0520">NAD</keyword>
<keyword id="KW-0560">Oxidoreductase</keyword>
<protein>
    <recommendedName>
        <fullName>NAD-dependent malic enzyme</fullName>
        <shortName>NAD-ME</shortName>
        <ecNumber>1.1.1.38</ecNumber>
    </recommendedName>
</protein>
<evidence type="ECO:0000250" key="1">
    <source>
        <dbReference type="UniProtKB" id="P40927"/>
    </source>
</evidence>
<evidence type="ECO:0000255" key="2">
    <source>
        <dbReference type="PROSITE-ProRule" id="PRU01007"/>
    </source>
</evidence>
<evidence type="ECO:0000269" key="3">
    <source>
    </source>
</evidence>
<evidence type="ECO:0000305" key="4"/>
<accession>P16468</accession>
<dbReference type="EC" id="1.1.1.38"/>
<dbReference type="EMBL" id="M19485">
    <property type="protein sequence ID" value="AAA22585.1"/>
    <property type="molecule type" value="Genomic_DNA"/>
</dbReference>
<dbReference type="PIR" id="A33307">
    <property type="entry name" value="DEBSXS"/>
</dbReference>
<dbReference type="SMR" id="P16468"/>
<dbReference type="GO" id="GO:0004471">
    <property type="term" value="F:malate dehydrogenase (decarboxylating) (NAD+) activity"/>
    <property type="evidence" value="ECO:0007669"/>
    <property type="project" value="RHEA"/>
</dbReference>
<dbReference type="GO" id="GO:0046872">
    <property type="term" value="F:metal ion binding"/>
    <property type="evidence" value="ECO:0007669"/>
    <property type="project" value="UniProtKB-KW"/>
</dbReference>
<dbReference type="GO" id="GO:0051287">
    <property type="term" value="F:NAD binding"/>
    <property type="evidence" value="ECO:0007669"/>
    <property type="project" value="InterPro"/>
</dbReference>
<dbReference type="GO" id="GO:0008948">
    <property type="term" value="F:oxaloacetate decarboxylase activity"/>
    <property type="evidence" value="ECO:0007669"/>
    <property type="project" value="RHEA"/>
</dbReference>
<dbReference type="CDD" id="cd05311">
    <property type="entry name" value="NAD_bind_2_malic_enz"/>
    <property type="match status" value="1"/>
</dbReference>
<dbReference type="FunFam" id="3.40.50.10380:FF:000003">
    <property type="entry name" value="NADP-dependent malic enzyme"/>
    <property type="match status" value="1"/>
</dbReference>
<dbReference type="FunFam" id="3.40.50.720:FF:000095">
    <property type="entry name" value="NADP-dependent malic enzyme"/>
    <property type="match status" value="1"/>
</dbReference>
<dbReference type="Gene3D" id="3.40.50.10380">
    <property type="entry name" value="Malic enzyme, N-terminal domain"/>
    <property type="match status" value="1"/>
</dbReference>
<dbReference type="Gene3D" id="3.40.50.720">
    <property type="entry name" value="NAD(P)-binding Rossmann-like Domain"/>
    <property type="match status" value="1"/>
</dbReference>
<dbReference type="InterPro" id="IPR002912">
    <property type="entry name" value="ACT_dom"/>
</dbReference>
<dbReference type="InterPro" id="IPR046346">
    <property type="entry name" value="Aminoacid_DH-like_N_sf"/>
</dbReference>
<dbReference type="InterPro" id="IPR051674">
    <property type="entry name" value="Malate_Decarboxylase"/>
</dbReference>
<dbReference type="InterPro" id="IPR015884">
    <property type="entry name" value="Malic_enzyme_CS"/>
</dbReference>
<dbReference type="InterPro" id="IPR012301">
    <property type="entry name" value="Malic_N_dom"/>
</dbReference>
<dbReference type="InterPro" id="IPR037062">
    <property type="entry name" value="Malic_N_dom_sf"/>
</dbReference>
<dbReference type="InterPro" id="IPR012302">
    <property type="entry name" value="Malic_NAD-bd"/>
</dbReference>
<dbReference type="InterPro" id="IPR045213">
    <property type="entry name" value="Malic_NAD-bd_bact_type"/>
</dbReference>
<dbReference type="InterPro" id="IPR001891">
    <property type="entry name" value="Malic_OxRdtase"/>
</dbReference>
<dbReference type="InterPro" id="IPR036291">
    <property type="entry name" value="NAD(P)-bd_dom_sf"/>
</dbReference>
<dbReference type="PANTHER" id="PTHR43237">
    <property type="entry name" value="NADP-DEPENDENT MALIC ENZYME"/>
    <property type="match status" value="1"/>
</dbReference>
<dbReference type="PANTHER" id="PTHR43237:SF4">
    <property type="entry name" value="NADP-DEPENDENT MALIC ENZYME"/>
    <property type="match status" value="1"/>
</dbReference>
<dbReference type="Pfam" id="PF00390">
    <property type="entry name" value="malic"/>
    <property type="match status" value="1"/>
</dbReference>
<dbReference type="Pfam" id="PF03949">
    <property type="entry name" value="Malic_M"/>
    <property type="match status" value="2"/>
</dbReference>
<dbReference type="PIRSF" id="PIRSF000106">
    <property type="entry name" value="ME"/>
    <property type="match status" value="1"/>
</dbReference>
<dbReference type="SMART" id="SM01274">
    <property type="entry name" value="malic"/>
    <property type="match status" value="1"/>
</dbReference>
<dbReference type="SMART" id="SM00919">
    <property type="entry name" value="Malic_M"/>
    <property type="match status" value="1"/>
</dbReference>
<dbReference type="SUPFAM" id="SSF53223">
    <property type="entry name" value="Aminoacid dehydrogenase-like, N-terminal domain"/>
    <property type="match status" value="1"/>
</dbReference>
<dbReference type="SUPFAM" id="SSF51735">
    <property type="entry name" value="NAD(P)-binding Rossmann-fold domains"/>
    <property type="match status" value="1"/>
</dbReference>
<dbReference type="PROSITE" id="PS51671">
    <property type="entry name" value="ACT"/>
    <property type="match status" value="1"/>
</dbReference>
<dbReference type="PROSITE" id="PS00331">
    <property type="entry name" value="MALIC_ENZYMES"/>
    <property type="match status" value="1"/>
</dbReference>
<reference key="1">
    <citation type="journal article" date="1989" name="J. Biol. Chem.">
        <title>Structure and properties of malic enzyme from Bacillus stearothermophilus.</title>
        <authorList>
            <person name="Kobayashi K."/>
            <person name="Doi S."/>
            <person name="Negoro S."/>
            <person name="Urabe I."/>
            <person name="Okada H."/>
        </authorList>
    </citation>
    <scope>NUCLEOTIDE SEQUENCE [GENOMIC DNA]</scope>
    <scope>FUNCTION</scope>
    <scope>CATALYTIC ACTIVITY</scope>
    <scope>SUBSTRATE SPECIFICITY</scope>
    <scope>COFACTOR</scope>
    <scope>ACTIVITY REGULATION</scope>
    <scope>SUBUNIT</scope>
</reference>
<sequence>MALPGGAAMNITIRLQFEKDIVSFSDIAAAIGKAGGDIVGIDVISSSKVHTVRDITVSALDTKQCDLIIEALKKIRGVKIVNVSDRTFLMHIGGKIETNSKIPVKTRDDLSRVYTPGVARVCTAIAEDPRKAYSLTIKRNTVAVVSDGTAVLGLGDIGPYAAMPVMEGKAMLFKEFAGVDAFPICLDTKDTEEIIQIVKAIAPAFGGINLEDISAPRCFEIEKRLKEELDIPVFHDDQHGTAVVLLAGLLNALKIVDKKLEDIKVVLTGIGAAGIACTKILLAAGVRNIIGVDRHGAIHRDETYENPYWQEYAQLTNPDNLKGSLSDVIAGADVFIGVSAPGILKVEDVKKMARDPIVFAMANPIPEIDPELAEPYVRVMATGRSDYPNQINNVLCFPGIFRGALDCRAREINEEMKLAAAKAIASVVTEDELNETYIIPSVFNSKVVERVRQAVVEAAYRTGVARKDNIPVGGYTGQ</sequence>
<feature type="chain" id="PRO_0000160207" description="NAD-dependent malic enzyme">
    <location>
        <begin position="1"/>
        <end position="478"/>
    </location>
</feature>
<feature type="domain" description="ACT" evidence="2">
    <location>
        <begin position="12"/>
        <end position="86"/>
    </location>
</feature>
<feature type="active site" description="Proton donor" evidence="1">
    <location>
        <position position="114"/>
    </location>
</feature>
<feature type="active site" description="Proton acceptor" evidence="1">
    <location>
        <position position="169"/>
    </location>
</feature>
<feature type="binding site" evidence="1">
    <location>
        <position position="211"/>
    </location>
    <ligand>
        <name>a divalent metal cation</name>
        <dbReference type="ChEBI" id="CHEBI:60240"/>
    </ligand>
</feature>
<feature type="binding site" evidence="1">
    <location>
        <position position="212"/>
    </location>
    <ligand>
        <name>a divalent metal cation</name>
        <dbReference type="ChEBI" id="CHEBI:60240"/>
    </ligand>
</feature>
<feature type="binding site" evidence="1">
    <location>
        <position position="237"/>
    </location>
    <ligand>
        <name>a divalent metal cation</name>
        <dbReference type="ChEBI" id="CHEBI:60240"/>
    </ligand>
</feature>
<feature type="binding site" evidence="1">
    <location>
        <begin position="270"/>
        <end position="273"/>
    </location>
    <ligand>
        <name>NAD(+)</name>
        <dbReference type="ChEBI" id="CHEBI:57540"/>
    </ligand>
</feature>
<feature type="binding site" evidence="1">
    <location>
        <position position="363"/>
    </location>
    <ligand>
        <name>NAD(+)</name>
        <dbReference type="ChEBI" id="CHEBI:57540"/>
    </ligand>
</feature>
<feature type="binding site" evidence="1">
    <location>
        <position position="393"/>
    </location>
    <ligand>
        <name>NAD(+)</name>
        <dbReference type="ChEBI" id="CHEBI:57540"/>
    </ligand>
</feature>
<comment type="function">
    <text evidence="3">In addition to the NAD-dependent oxidative decarboxylation of L-malate, the enzyme catalyzes the decarboxylation of oxaloacetate.</text>
</comment>
<comment type="catalytic activity">
    <reaction evidence="3">
        <text>(S)-malate + NAD(+) = pyruvate + CO2 + NADH</text>
        <dbReference type="Rhea" id="RHEA:12653"/>
        <dbReference type="ChEBI" id="CHEBI:15361"/>
        <dbReference type="ChEBI" id="CHEBI:15589"/>
        <dbReference type="ChEBI" id="CHEBI:16526"/>
        <dbReference type="ChEBI" id="CHEBI:57540"/>
        <dbReference type="ChEBI" id="CHEBI:57945"/>
        <dbReference type="EC" id="1.1.1.38"/>
    </reaction>
</comment>
<comment type="catalytic activity">
    <reaction evidence="3">
        <text>oxaloacetate + H(+) = pyruvate + CO2</text>
        <dbReference type="Rhea" id="RHEA:15641"/>
        <dbReference type="ChEBI" id="CHEBI:15361"/>
        <dbReference type="ChEBI" id="CHEBI:15378"/>
        <dbReference type="ChEBI" id="CHEBI:16452"/>
        <dbReference type="ChEBI" id="CHEBI:16526"/>
        <dbReference type="EC" id="1.1.1.38"/>
    </reaction>
</comment>
<comment type="cofactor">
    <cofactor evidence="3">
        <name>Mg(2+)</name>
        <dbReference type="ChEBI" id="CHEBI:18420"/>
    </cofactor>
    <cofactor evidence="3">
        <name>Mn(2+)</name>
        <dbReference type="ChEBI" id="CHEBI:29035"/>
    </cofactor>
    <text evidence="3">Divalent metal cations. Prefers magnesium or manganese.</text>
</comment>
<comment type="activity regulation">
    <text evidence="3">The activity is enhanced 5-7 times by ammonium and potassium.</text>
</comment>
<comment type="subunit">
    <text evidence="3">Homotetramer.</text>
</comment>
<comment type="miscellaneous">
    <text>This enzyme has a higher affinity for NAD than for NADP.</text>
</comment>
<comment type="similarity">
    <text evidence="4">Belongs to the malic enzymes family.</text>
</comment>
<name>MAOX_GEOSE</name>
<proteinExistence type="evidence at protein level"/>